<accession>Q8EGR4</accession>
<sequence>MKFIVKLYPEIMMKSKPVRMRFTKMLETNIRNVLKKVDDDAKVQRQWDRIMVMVPKNKPELAQAFGERLACIPGIAHVVQVDEYSFTSVDDIYQQVLPVYRDQIAGKTFCVRVKRTGSHDFNSIEVERYVGGGLNQFTDAIGVRLKNPEVTVNLEIEGDKLYMVTKRIEGLGGFPMATQEDVLSLISGGFDSGVSSYQFIKKGARTHYCFFNLGGAQHEIGVKQVAYHLWKTFGESHKVKFVSVPFEPVVAEILEKIDNGQMGVVLKRMMMRTAARIAERMGIQAIVTGESLGQVSSQTLTNLNVIDRCTDMLILRPLITMDKQDIINECRRIGTEDFAKSMPEYCGVISQKPTVKAVLAKVEAEETKFSEDLIDRIVEQAVAIDIREIAEQMNTRITETETVVAIDTNEVVIDIRAPEEEENKPLEIEGVEIKRIPFFKLATQFADLDKQKTYLLYCERGVMSKLQALYLIEQGYHNVKVYRP</sequence>
<keyword id="KW-0067">ATP-binding</keyword>
<keyword id="KW-0963">Cytoplasm</keyword>
<keyword id="KW-1015">Disulfide bond</keyword>
<keyword id="KW-0547">Nucleotide-binding</keyword>
<keyword id="KW-0676">Redox-active center</keyword>
<keyword id="KW-1185">Reference proteome</keyword>
<keyword id="KW-0694">RNA-binding</keyword>
<keyword id="KW-0784">Thiamine biosynthesis</keyword>
<keyword id="KW-0808">Transferase</keyword>
<keyword id="KW-0820">tRNA-binding</keyword>
<organism>
    <name type="scientific">Shewanella oneidensis (strain ATCC 700550 / JCM 31522 / CIP 106686 / LMG 19005 / NCIMB 14063 / MR-1)</name>
    <dbReference type="NCBI Taxonomy" id="211586"/>
    <lineage>
        <taxon>Bacteria</taxon>
        <taxon>Pseudomonadati</taxon>
        <taxon>Pseudomonadota</taxon>
        <taxon>Gammaproteobacteria</taxon>
        <taxon>Alteromonadales</taxon>
        <taxon>Shewanellaceae</taxon>
        <taxon>Shewanella</taxon>
    </lineage>
</organism>
<gene>
    <name evidence="1" type="primary">thiI</name>
    <name type="ordered locus">SO_1531</name>
</gene>
<comment type="function">
    <text evidence="1">Catalyzes the ATP-dependent transfer of a sulfur to tRNA to produce 4-thiouridine in position 8 of tRNAs, which functions as a near-UV photosensor. Also catalyzes the transfer of sulfur to the sulfur carrier protein ThiS, forming ThiS-thiocarboxylate. This is a step in the synthesis of thiazole, in the thiamine biosynthesis pathway. The sulfur is donated as persulfide by IscS.</text>
</comment>
<comment type="catalytic activity">
    <reaction evidence="1">
        <text>[ThiI sulfur-carrier protein]-S-sulfanyl-L-cysteine + a uridine in tRNA + 2 reduced [2Fe-2S]-[ferredoxin] + ATP + H(+) = [ThiI sulfur-carrier protein]-L-cysteine + a 4-thiouridine in tRNA + 2 oxidized [2Fe-2S]-[ferredoxin] + AMP + diphosphate</text>
        <dbReference type="Rhea" id="RHEA:24176"/>
        <dbReference type="Rhea" id="RHEA-COMP:10000"/>
        <dbReference type="Rhea" id="RHEA-COMP:10001"/>
        <dbReference type="Rhea" id="RHEA-COMP:13337"/>
        <dbReference type="Rhea" id="RHEA-COMP:13338"/>
        <dbReference type="Rhea" id="RHEA-COMP:13339"/>
        <dbReference type="Rhea" id="RHEA-COMP:13340"/>
        <dbReference type="ChEBI" id="CHEBI:15378"/>
        <dbReference type="ChEBI" id="CHEBI:29950"/>
        <dbReference type="ChEBI" id="CHEBI:30616"/>
        <dbReference type="ChEBI" id="CHEBI:33019"/>
        <dbReference type="ChEBI" id="CHEBI:33737"/>
        <dbReference type="ChEBI" id="CHEBI:33738"/>
        <dbReference type="ChEBI" id="CHEBI:61963"/>
        <dbReference type="ChEBI" id="CHEBI:65315"/>
        <dbReference type="ChEBI" id="CHEBI:136798"/>
        <dbReference type="ChEBI" id="CHEBI:456215"/>
        <dbReference type="EC" id="2.8.1.4"/>
    </reaction>
</comment>
<comment type="catalytic activity">
    <reaction evidence="1">
        <text>[ThiS sulfur-carrier protein]-C-terminal Gly-Gly-AMP + S-sulfanyl-L-cysteinyl-[cysteine desulfurase] + AH2 = [ThiS sulfur-carrier protein]-C-terminal-Gly-aminoethanethioate + L-cysteinyl-[cysteine desulfurase] + A + AMP + 2 H(+)</text>
        <dbReference type="Rhea" id="RHEA:43340"/>
        <dbReference type="Rhea" id="RHEA-COMP:12157"/>
        <dbReference type="Rhea" id="RHEA-COMP:12158"/>
        <dbReference type="Rhea" id="RHEA-COMP:12910"/>
        <dbReference type="Rhea" id="RHEA-COMP:19908"/>
        <dbReference type="ChEBI" id="CHEBI:13193"/>
        <dbReference type="ChEBI" id="CHEBI:15378"/>
        <dbReference type="ChEBI" id="CHEBI:17499"/>
        <dbReference type="ChEBI" id="CHEBI:29950"/>
        <dbReference type="ChEBI" id="CHEBI:61963"/>
        <dbReference type="ChEBI" id="CHEBI:90618"/>
        <dbReference type="ChEBI" id="CHEBI:232372"/>
        <dbReference type="ChEBI" id="CHEBI:456215"/>
    </reaction>
</comment>
<comment type="pathway">
    <text evidence="1">Cofactor biosynthesis; thiamine diphosphate biosynthesis.</text>
</comment>
<comment type="subcellular location">
    <subcellularLocation>
        <location evidence="1">Cytoplasm</location>
    </subcellularLocation>
</comment>
<comment type="similarity">
    <text evidence="1">Belongs to the ThiI family.</text>
</comment>
<reference key="1">
    <citation type="journal article" date="2002" name="Nat. Biotechnol.">
        <title>Genome sequence of the dissimilatory metal ion-reducing bacterium Shewanella oneidensis.</title>
        <authorList>
            <person name="Heidelberg J.F."/>
            <person name="Paulsen I.T."/>
            <person name="Nelson K.E."/>
            <person name="Gaidos E.J."/>
            <person name="Nelson W.C."/>
            <person name="Read T.D."/>
            <person name="Eisen J.A."/>
            <person name="Seshadri R."/>
            <person name="Ward N.L."/>
            <person name="Methe B.A."/>
            <person name="Clayton R.A."/>
            <person name="Meyer T."/>
            <person name="Tsapin A."/>
            <person name="Scott J."/>
            <person name="Beanan M.J."/>
            <person name="Brinkac L.M."/>
            <person name="Daugherty S.C."/>
            <person name="DeBoy R.T."/>
            <person name="Dodson R.J."/>
            <person name="Durkin A.S."/>
            <person name="Haft D.H."/>
            <person name="Kolonay J.F."/>
            <person name="Madupu R."/>
            <person name="Peterson J.D."/>
            <person name="Umayam L.A."/>
            <person name="White O."/>
            <person name="Wolf A.M."/>
            <person name="Vamathevan J.J."/>
            <person name="Weidman J.F."/>
            <person name="Impraim M."/>
            <person name="Lee K."/>
            <person name="Berry K.J."/>
            <person name="Lee C."/>
            <person name="Mueller J."/>
            <person name="Khouri H.M."/>
            <person name="Gill J."/>
            <person name="Utterback T.R."/>
            <person name="McDonald L.A."/>
            <person name="Feldblyum T.V."/>
            <person name="Smith H.O."/>
            <person name="Venter J.C."/>
            <person name="Nealson K.H."/>
            <person name="Fraser C.M."/>
        </authorList>
    </citation>
    <scope>NUCLEOTIDE SEQUENCE [LARGE SCALE GENOMIC DNA]</scope>
    <source>
        <strain>ATCC 700550 / JCM 31522 / CIP 106686 / LMG 19005 / NCIMB 14063 / MR-1</strain>
    </source>
</reference>
<evidence type="ECO:0000255" key="1">
    <source>
        <dbReference type="HAMAP-Rule" id="MF_00021"/>
    </source>
</evidence>
<dbReference type="EC" id="2.8.1.4" evidence="1"/>
<dbReference type="EMBL" id="AE014299">
    <property type="protein sequence ID" value="AAN54591.1"/>
    <property type="molecule type" value="Genomic_DNA"/>
</dbReference>
<dbReference type="RefSeq" id="NP_717147.1">
    <property type="nucleotide sequence ID" value="NC_004347.2"/>
</dbReference>
<dbReference type="RefSeq" id="WP_011071709.1">
    <property type="nucleotide sequence ID" value="NC_004347.2"/>
</dbReference>
<dbReference type="SMR" id="Q8EGR4"/>
<dbReference type="STRING" id="211586.SO_1531"/>
<dbReference type="PaxDb" id="211586-SO_1531"/>
<dbReference type="KEGG" id="son:SO_1531"/>
<dbReference type="PATRIC" id="fig|211586.12.peg.1474"/>
<dbReference type="eggNOG" id="COG0301">
    <property type="taxonomic scope" value="Bacteria"/>
</dbReference>
<dbReference type="eggNOG" id="COG0607">
    <property type="taxonomic scope" value="Bacteria"/>
</dbReference>
<dbReference type="HOGENOM" id="CLU_037952_4_1_6"/>
<dbReference type="OrthoDB" id="9773948at2"/>
<dbReference type="PhylomeDB" id="Q8EGR4"/>
<dbReference type="BioCyc" id="SONE211586:G1GMP-1414-MONOMER"/>
<dbReference type="UniPathway" id="UPA00060"/>
<dbReference type="Proteomes" id="UP000008186">
    <property type="component" value="Chromosome"/>
</dbReference>
<dbReference type="GO" id="GO:0005829">
    <property type="term" value="C:cytosol"/>
    <property type="evidence" value="ECO:0000318"/>
    <property type="project" value="GO_Central"/>
</dbReference>
<dbReference type="GO" id="GO:0005524">
    <property type="term" value="F:ATP binding"/>
    <property type="evidence" value="ECO:0007669"/>
    <property type="project" value="UniProtKB-UniRule"/>
</dbReference>
<dbReference type="GO" id="GO:0004810">
    <property type="term" value="F:CCA tRNA nucleotidyltransferase activity"/>
    <property type="evidence" value="ECO:0007669"/>
    <property type="project" value="InterPro"/>
</dbReference>
<dbReference type="GO" id="GO:0000049">
    <property type="term" value="F:tRNA binding"/>
    <property type="evidence" value="ECO:0007669"/>
    <property type="project" value="UniProtKB-UniRule"/>
</dbReference>
<dbReference type="GO" id="GO:0140741">
    <property type="term" value="F:tRNA-uracil-4 sulfurtransferase activity"/>
    <property type="evidence" value="ECO:0007669"/>
    <property type="project" value="UniProtKB-EC"/>
</dbReference>
<dbReference type="GO" id="GO:0009228">
    <property type="term" value="P:thiamine biosynthetic process"/>
    <property type="evidence" value="ECO:0007669"/>
    <property type="project" value="UniProtKB-KW"/>
</dbReference>
<dbReference type="GO" id="GO:0009229">
    <property type="term" value="P:thiamine diphosphate biosynthetic process"/>
    <property type="evidence" value="ECO:0007669"/>
    <property type="project" value="UniProtKB-UniRule"/>
</dbReference>
<dbReference type="GO" id="GO:0052837">
    <property type="term" value="P:thiazole biosynthetic process"/>
    <property type="evidence" value="ECO:0000318"/>
    <property type="project" value="GO_Central"/>
</dbReference>
<dbReference type="GO" id="GO:0002937">
    <property type="term" value="P:tRNA 4-thiouridine biosynthesis"/>
    <property type="evidence" value="ECO:0000318"/>
    <property type="project" value="GO_Central"/>
</dbReference>
<dbReference type="CDD" id="cd01712">
    <property type="entry name" value="PPase_ThiI"/>
    <property type="match status" value="1"/>
</dbReference>
<dbReference type="CDD" id="cd00158">
    <property type="entry name" value="RHOD"/>
    <property type="match status" value="1"/>
</dbReference>
<dbReference type="CDD" id="cd11716">
    <property type="entry name" value="THUMP_ThiI"/>
    <property type="match status" value="1"/>
</dbReference>
<dbReference type="FunFam" id="3.30.2130.30:FF:000002">
    <property type="entry name" value="tRNA sulfurtransferase"/>
    <property type="match status" value="1"/>
</dbReference>
<dbReference type="FunFam" id="3.40.250.10:FF:000003">
    <property type="entry name" value="tRNA sulfurtransferase"/>
    <property type="match status" value="1"/>
</dbReference>
<dbReference type="FunFam" id="3.40.50.620:FF:000029">
    <property type="entry name" value="tRNA sulfurtransferase"/>
    <property type="match status" value="1"/>
</dbReference>
<dbReference type="Gene3D" id="3.30.2130.30">
    <property type="match status" value="1"/>
</dbReference>
<dbReference type="Gene3D" id="3.40.50.620">
    <property type="entry name" value="HUPs"/>
    <property type="match status" value="1"/>
</dbReference>
<dbReference type="Gene3D" id="3.40.250.10">
    <property type="entry name" value="Rhodanese-like domain"/>
    <property type="match status" value="1"/>
</dbReference>
<dbReference type="HAMAP" id="MF_00021">
    <property type="entry name" value="ThiI"/>
    <property type="match status" value="1"/>
</dbReference>
<dbReference type="InterPro" id="IPR001763">
    <property type="entry name" value="Rhodanese-like_dom"/>
</dbReference>
<dbReference type="InterPro" id="IPR036873">
    <property type="entry name" value="Rhodanese-like_dom_sf"/>
</dbReference>
<dbReference type="InterPro" id="IPR014729">
    <property type="entry name" value="Rossmann-like_a/b/a_fold"/>
</dbReference>
<dbReference type="InterPro" id="IPR020536">
    <property type="entry name" value="ThiI_AANH"/>
</dbReference>
<dbReference type="InterPro" id="IPR054173">
    <property type="entry name" value="ThiI_fer"/>
</dbReference>
<dbReference type="InterPro" id="IPR049961">
    <property type="entry name" value="ThiI_N"/>
</dbReference>
<dbReference type="InterPro" id="IPR026340">
    <property type="entry name" value="THII_Thiazole_biosynth_dom"/>
</dbReference>
<dbReference type="InterPro" id="IPR004114">
    <property type="entry name" value="THUMP_dom"/>
</dbReference>
<dbReference type="InterPro" id="IPR049962">
    <property type="entry name" value="THUMP_ThiI"/>
</dbReference>
<dbReference type="InterPro" id="IPR003720">
    <property type="entry name" value="tRNA_STrfase"/>
</dbReference>
<dbReference type="InterPro" id="IPR050102">
    <property type="entry name" value="tRNA_sulfurtransferase_ThiI"/>
</dbReference>
<dbReference type="NCBIfam" id="TIGR04271">
    <property type="entry name" value="ThiI_C_thiazole"/>
    <property type="match status" value="1"/>
</dbReference>
<dbReference type="NCBIfam" id="TIGR00342">
    <property type="entry name" value="tRNA uracil 4-sulfurtransferase ThiI"/>
    <property type="match status" value="1"/>
</dbReference>
<dbReference type="PANTHER" id="PTHR43209">
    <property type="entry name" value="TRNA SULFURTRANSFERASE"/>
    <property type="match status" value="1"/>
</dbReference>
<dbReference type="PANTHER" id="PTHR43209:SF1">
    <property type="entry name" value="TRNA SULFURTRANSFERASE"/>
    <property type="match status" value="1"/>
</dbReference>
<dbReference type="Pfam" id="PF00581">
    <property type="entry name" value="Rhodanese"/>
    <property type="match status" value="1"/>
</dbReference>
<dbReference type="Pfam" id="PF02568">
    <property type="entry name" value="ThiI"/>
    <property type="match status" value="1"/>
</dbReference>
<dbReference type="Pfam" id="PF22025">
    <property type="entry name" value="ThiI_fer"/>
    <property type="match status" value="1"/>
</dbReference>
<dbReference type="Pfam" id="PF02926">
    <property type="entry name" value="THUMP"/>
    <property type="match status" value="1"/>
</dbReference>
<dbReference type="SMART" id="SM00981">
    <property type="entry name" value="THUMP"/>
    <property type="match status" value="1"/>
</dbReference>
<dbReference type="SUPFAM" id="SSF52402">
    <property type="entry name" value="Adenine nucleotide alpha hydrolases-like"/>
    <property type="match status" value="1"/>
</dbReference>
<dbReference type="SUPFAM" id="SSF52821">
    <property type="entry name" value="Rhodanese/Cell cycle control phosphatase"/>
    <property type="match status" value="1"/>
</dbReference>
<dbReference type="SUPFAM" id="SSF143437">
    <property type="entry name" value="THUMP domain-like"/>
    <property type="match status" value="1"/>
</dbReference>
<dbReference type="PROSITE" id="PS50206">
    <property type="entry name" value="RHODANESE_3"/>
    <property type="match status" value="1"/>
</dbReference>
<dbReference type="PROSITE" id="PS51165">
    <property type="entry name" value="THUMP"/>
    <property type="match status" value="1"/>
</dbReference>
<feature type="chain" id="PRO_0000154861" description="tRNA sulfurtransferase">
    <location>
        <begin position="1"/>
        <end position="484"/>
    </location>
</feature>
<feature type="domain" description="THUMP" evidence="1">
    <location>
        <begin position="63"/>
        <end position="167"/>
    </location>
</feature>
<feature type="domain" description="Rhodanese" evidence="1">
    <location>
        <begin position="406"/>
        <end position="484"/>
    </location>
</feature>
<feature type="active site" description="Cysteine persulfide intermediate" evidence="1">
    <location>
        <position position="458"/>
    </location>
</feature>
<feature type="binding site" evidence="1">
    <location>
        <begin position="185"/>
        <end position="186"/>
    </location>
    <ligand>
        <name>ATP</name>
        <dbReference type="ChEBI" id="CHEBI:30616"/>
    </ligand>
</feature>
<feature type="binding site" evidence="1">
    <location>
        <position position="267"/>
    </location>
    <ligand>
        <name>ATP</name>
        <dbReference type="ChEBI" id="CHEBI:30616"/>
    </ligand>
</feature>
<feature type="binding site" evidence="1">
    <location>
        <position position="289"/>
    </location>
    <ligand>
        <name>ATP</name>
        <dbReference type="ChEBI" id="CHEBI:30616"/>
    </ligand>
</feature>
<feature type="binding site" evidence="1">
    <location>
        <position position="298"/>
    </location>
    <ligand>
        <name>ATP</name>
        <dbReference type="ChEBI" id="CHEBI:30616"/>
    </ligand>
</feature>
<feature type="disulfide bond" description="Redox-active" evidence="1">
    <location>
        <begin position="346"/>
        <end position="458"/>
    </location>
</feature>
<name>THII_SHEON</name>
<proteinExistence type="inferred from homology"/>
<protein>
    <recommendedName>
        <fullName evidence="1">tRNA sulfurtransferase</fullName>
        <ecNumber evidence="1">2.8.1.4</ecNumber>
    </recommendedName>
    <alternativeName>
        <fullName evidence="1">Sulfur carrier protein ThiS sulfurtransferase</fullName>
    </alternativeName>
    <alternativeName>
        <fullName evidence="1">Thiamine biosynthesis protein ThiI</fullName>
    </alternativeName>
    <alternativeName>
        <fullName evidence="1">tRNA 4-thiouridine synthase</fullName>
    </alternativeName>
</protein>